<proteinExistence type="evidence at protein level"/>
<comment type="subcellular location">
    <subcellularLocation>
        <location evidence="3">Secreted</location>
    </subcellularLocation>
</comment>
<comment type="tissue specificity">
    <text evidence="3">Prismatic layer of shell (at protein level).</text>
</comment>
<organism>
    <name type="scientific">Pinctada maxima</name>
    <name type="common">Silver-lipped pearl oyster</name>
    <name type="synonym">White-lipped pearl oyster</name>
    <dbReference type="NCBI Taxonomy" id="104660"/>
    <lineage>
        <taxon>Eukaryota</taxon>
        <taxon>Metazoa</taxon>
        <taxon>Spiralia</taxon>
        <taxon>Lophotrochozoa</taxon>
        <taxon>Mollusca</taxon>
        <taxon>Bivalvia</taxon>
        <taxon>Autobranchia</taxon>
        <taxon>Pteriomorphia</taxon>
        <taxon>Pterioida</taxon>
        <taxon>Pterioidea</taxon>
        <taxon>Pteriidae</taxon>
        <taxon>Pinctada</taxon>
    </lineage>
</organism>
<accession>P86961</accession>
<name>GTRP_PINMA</name>
<protein>
    <recommendedName>
        <fullName>Glycine and tyrosine-rich protein</fullName>
    </recommendedName>
    <alternativeName>
        <fullName>Prism uncharacterized shell protein 7</fullName>
        <shortName>PUSP7</shortName>
    </alternativeName>
</protein>
<evidence type="ECO:0000255" key="1"/>
<evidence type="ECO:0000269" key="2">
    <source>
    </source>
</evidence>
<evidence type="ECO:0000269" key="3">
    <source>
    </source>
</evidence>
<evidence type="ECO:0000305" key="4"/>
<sequence length="90" mass="9517">MRRSVLVVFLVLAVTNVAVEAISRRGSFLAGGLLGLGLGAAASRGFGFPGYYGGYYGGGYYPMGGYYPMGGYYPMGGFYPSYHTFGGYYG</sequence>
<keyword id="KW-0903">Direct protein sequencing</keyword>
<keyword id="KW-0964">Secreted</keyword>
<keyword id="KW-0732">Signal</keyword>
<dbReference type="EMBL" id="GH280201">
    <property type="status" value="NOT_ANNOTATED_CDS"/>
    <property type="molecule type" value="mRNA"/>
</dbReference>
<dbReference type="GO" id="GO:0005576">
    <property type="term" value="C:extracellular region"/>
    <property type="evidence" value="ECO:0007669"/>
    <property type="project" value="UniProtKB-SubCell"/>
</dbReference>
<reference evidence="4" key="1">
    <citation type="journal article" date="2010" name="Mol. Biol. Evol.">
        <title>Parallel evolution of nacre building gene sets in molluscs.</title>
        <authorList>
            <person name="Jackson D.J."/>
            <person name="McDougall C."/>
            <person name="Woodcroft B."/>
            <person name="Moase P."/>
            <person name="Rose R.A."/>
            <person name="Kube M."/>
            <person name="Reinhardt R."/>
            <person name="Rokhsar D.S."/>
            <person name="Montagnani C."/>
            <person name="Joubert C."/>
            <person name="Piquemal D."/>
            <person name="Degnan B.M."/>
        </authorList>
    </citation>
    <scope>NUCLEOTIDE SEQUENCE [MRNA]</scope>
    <scope>IDENTIFICATION</scope>
    <source>
        <tissue evidence="2">Mantle</tissue>
    </source>
</reference>
<reference key="2">
    <citation type="journal article" date="2012" name="Proc. Natl. Acad. Sci. U.S.A.">
        <title>Different secretory repertoires control the biomineralization processes of prism and nacre deposition of the pearl oyster shell.</title>
        <authorList>
            <person name="Marie B."/>
            <person name="Joubert C."/>
            <person name="Tayale A."/>
            <person name="Zanella-Cleon I."/>
            <person name="Belliard C."/>
            <person name="Piquemal D."/>
            <person name="Cochennec-Laureau N."/>
            <person name="Marin F."/>
            <person name="Gueguen Y."/>
            <person name="Montagnani C."/>
        </authorList>
    </citation>
    <scope>PROTEIN SEQUENCE OF 25-44</scope>
    <scope>SUBCELLULAR LOCATION</scope>
    <scope>TISSUE SPECIFICITY</scope>
    <source>
        <tissue>Shell</tissue>
    </source>
</reference>
<feature type="signal peptide" evidence="1">
    <location>
        <begin position="1"/>
        <end position="21"/>
    </location>
</feature>
<feature type="chain" id="PRO_0000413074" description="Glycine and tyrosine-rich protein" evidence="1">
    <location>
        <begin position="22"/>
        <end position="90"/>
    </location>
</feature>